<proteinExistence type="evidence at protein level"/>
<protein>
    <recommendedName>
        <fullName>CDK-activating kinase assembly factor MAT1</fullName>
    </recommendedName>
    <alternativeName>
        <fullName>CDK7/cyclin-H assembly factor</fullName>
    </alternativeName>
    <alternativeName>
        <fullName>Menage a trois</fullName>
    </alternativeName>
    <alternativeName>
        <fullName>RING finger protein MAT1</fullName>
    </alternativeName>
    <alternativeName>
        <fullName>p35</fullName>
    </alternativeName>
    <alternativeName>
        <fullName>p36</fullName>
    </alternativeName>
</protein>
<dbReference type="EMBL" id="U35249">
    <property type="protein sequence ID" value="AAA91741.1"/>
    <property type="molecule type" value="mRNA"/>
</dbReference>
<dbReference type="EMBL" id="AK008134">
    <property type="protein sequence ID" value="BAB25483.1"/>
    <property type="molecule type" value="mRNA"/>
</dbReference>
<dbReference type="EMBL" id="AK008249">
    <property type="protein sequence ID" value="BAB25556.1"/>
    <property type="molecule type" value="mRNA"/>
</dbReference>
<dbReference type="EMBL" id="AK155859">
    <property type="protein sequence ID" value="BAE33464.1"/>
    <property type="molecule type" value="mRNA"/>
</dbReference>
<dbReference type="EMBL" id="AK157721">
    <property type="protein sequence ID" value="BAE34168.1"/>
    <property type="molecule type" value="mRNA"/>
</dbReference>
<dbReference type="EMBL" id="BC089023">
    <property type="protein sequence ID" value="AAH89023.1"/>
    <property type="molecule type" value="mRNA"/>
</dbReference>
<dbReference type="EMBL" id="BC115630">
    <property type="protein sequence ID" value="AAI15631.1"/>
    <property type="molecule type" value="mRNA"/>
</dbReference>
<dbReference type="CCDS" id="CCDS49087.1"/>
<dbReference type="PIR" id="A57235">
    <property type="entry name" value="A57235"/>
</dbReference>
<dbReference type="RefSeq" id="NP_032638.2">
    <property type="nucleotide sequence ID" value="NM_008612.2"/>
</dbReference>
<dbReference type="SMR" id="P51949"/>
<dbReference type="BioGRID" id="201456">
    <property type="interactions" value="2"/>
</dbReference>
<dbReference type="ComplexPortal" id="CPX-3268">
    <property type="entry name" value="Cyclin-dependent protein kinase-activating kinase complex"/>
</dbReference>
<dbReference type="FunCoup" id="P51949">
    <property type="interactions" value="2501"/>
</dbReference>
<dbReference type="IntAct" id="P51949">
    <property type="interactions" value="1"/>
</dbReference>
<dbReference type="STRING" id="10090.ENSMUSP00000021523"/>
<dbReference type="iPTMnet" id="P51949"/>
<dbReference type="PhosphoSitePlus" id="P51949"/>
<dbReference type="SwissPalm" id="P51949"/>
<dbReference type="jPOST" id="P51949"/>
<dbReference type="PaxDb" id="10090-ENSMUSP00000021523"/>
<dbReference type="PeptideAtlas" id="P51949"/>
<dbReference type="ProteomicsDB" id="295698"/>
<dbReference type="Pumba" id="P51949"/>
<dbReference type="Antibodypedia" id="34">
    <property type="antibodies" value="247 antibodies from 35 providers"/>
</dbReference>
<dbReference type="DNASU" id="17420"/>
<dbReference type="Ensembl" id="ENSMUST00000021523.7">
    <property type="protein sequence ID" value="ENSMUSP00000021523.7"/>
    <property type="gene ID" value="ENSMUSG00000021103.13"/>
</dbReference>
<dbReference type="GeneID" id="17420"/>
<dbReference type="KEGG" id="mmu:17420"/>
<dbReference type="UCSC" id="uc007nwe.1">
    <property type="organism name" value="mouse"/>
</dbReference>
<dbReference type="AGR" id="MGI:106207"/>
<dbReference type="CTD" id="4331"/>
<dbReference type="MGI" id="MGI:106207">
    <property type="gene designation" value="Mnat1"/>
</dbReference>
<dbReference type="VEuPathDB" id="HostDB:ENSMUSG00000021103"/>
<dbReference type="eggNOG" id="KOG3800">
    <property type="taxonomic scope" value="Eukaryota"/>
</dbReference>
<dbReference type="GeneTree" id="ENSGT00390000002319"/>
<dbReference type="HOGENOM" id="CLU_048466_0_1_1"/>
<dbReference type="InParanoid" id="P51949"/>
<dbReference type="OMA" id="QGLYYTA"/>
<dbReference type="OrthoDB" id="5963at2759"/>
<dbReference type="PhylomeDB" id="P51949"/>
<dbReference type="TreeFam" id="TF106124"/>
<dbReference type="Reactome" id="R-MMU-112382">
    <property type="pathway name" value="Formation of RNA Pol II elongation complex"/>
</dbReference>
<dbReference type="Reactome" id="R-MMU-113418">
    <property type="pathway name" value="Formation of the Early Elongation Complex"/>
</dbReference>
<dbReference type="Reactome" id="R-MMU-5696395">
    <property type="pathway name" value="Formation of Incision Complex in GG-NER"/>
</dbReference>
<dbReference type="Reactome" id="R-MMU-674695">
    <property type="pathway name" value="RNA Polymerase II Pre-transcription Events"/>
</dbReference>
<dbReference type="Reactome" id="R-MMU-6781823">
    <property type="pathway name" value="Formation of TC-NER Pre-Incision Complex"/>
</dbReference>
<dbReference type="Reactome" id="R-MMU-6782135">
    <property type="pathway name" value="Dual incision in TC-NER"/>
</dbReference>
<dbReference type="Reactome" id="R-MMU-6782210">
    <property type="pathway name" value="Gap-filling DNA repair synthesis and ligation in TC-NER"/>
</dbReference>
<dbReference type="Reactome" id="R-MMU-6796648">
    <property type="pathway name" value="TP53 Regulates Transcription of DNA Repair Genes"/>
</dbReference>
<dbReference type="Reactome" id="R-MMU-69202">
    <property type="pathway name" value="Cyclin E associated events during G1/S transition"/>
</dbReference>
<dbReference type="Reactome" id="R-MMU-69231">
    <property type="pathway name" value="Cyclin D associated events in G1"/>
</dbReference>
<dbReference type="Reactome" id="R-MMU-69273">
    <property type="pathway name" value="Cyclin A/B1/B2 associated events during G2/M transition"/>
</dbReference>
<dbReference type="Reactome" id="R-MMU-69656">
    <property type="pathway name" value="Cyclin A:Cdk2-associated events at S phase entry"/>
</dbReference>
<dbReference type="Reactome" id="R-MMU-72086">
    <property type="pathway name" value="mRNA Capping"/>
</dbReference>
<dbReference type="Reactome" id="R-MMU-73762">
    <property type="pathway name" value="RNA Polymerase I Transcription Initiation"/>
</dbReference>
<dbReference type="Reactome" id="R-MMU-73772">
    <property type="pathway name" value="RNA Polymerase I Promoter Escape"/>
</dbReference>
<dbReference type="Reactome" id="R-MMU-73776">
    <property type="pathway name" value="RNA Polymerase II Promoter Escape"/>
</dbReference>
<dbReference type="Reactome" id="R-MMU-73779">
    <property type="pathway name" value="RNA Polymerase II Transcription Pre-Initiation And Promoter Opening"/>
</dbReference>
<dbReference type="Reactome" id="R-MMU-73863">
    <property type="pathway name" value="RNA Polymerase I Transcription Termination"/>
</dbReference>
<dbReference type="Reactome" id="R-MMU-75953">
    <property type="pathway name" value="RNA Polymerase II Transcription Initiation"/>
</dbReference>
<dbReference type="Reactome" id="R-MMU-75955">
    <property type="pathway name" value="RNA Polymerase II Transcription Elongation"/>
</dbReference>
<dbReference type="Reactome" id="R-MMU-76042">
    <property type="pathway name" value="RNA Polymerase II Transcription Initiation And Promoter Clearance"/>
</dbReference>
<dbReference type="Reactome" id="R-MMU-77075">
    <property type="pathway name" value="RNA Pol II CTD phosphorylation and interaction with CE"/>
</dbReference>
<dbReference type="Reactome" id="R-MMU-8939236">
    <property type="pathway name" value="RUNX1 regulates transcription of genes involved in differentiation of HSCs"/>
</dbReference>
<dbReference type="BioGRID-ORCS" id="17420">
    <property type="hits" value="22 hits in 119 CRISPR screens"/>
</dbReference>
<dbReference type="ChiTaRS" id="Mnat1">
    <property type="organism name" value="mouse"/>
</dbReference>
<dbReference type="PRO" id="PR:P51949"/>
<dbReference type="Proteomes" id="UP000000589">
    <property type="component" value="Chromosome 12"/>
</dbReference>
<dbReference type="RNAct" id="P51949">
    <property type="molecule type" value="protein"/>
</dbReference>
<dbReference type="Bgee" id="ENSMUSG00000021103">
    <property type="expression patterns" value="Expressed in hindlimb bud and 259 other cell types or tissues"/>
</dbReference>
<dbReference type="ExpressionAtlas" id="P51949">
    <property type="expression patterns" value="baseline and differential"/>
</dbReference>
<dbReference type="GO" id="GO:0070516">
    <property type="term" value="C:CAK-ERCC2 complex"/>
    <property type="evidence" value="ECO:0007669"/>
    <property type="project" value="Ensembl"/>
</dbReference>
<dbReference type="GO" id="GO:0000307">
    <property type="term" value="C:cyclin-dependent protein kinase holoenzyme complex"/>
    <property type="evidence" value="ECO:0000266"/>
    <property type="project" value="ComplexPortal"/>
</dbReference>
<dbReference type="GO" id="GO:0000439">
    <property type="term" value="C:transcription factor TFIIH core complex"/>
    <property type="evidence" value="ECO:0007669"/>
    <property type="project" value="Ensembl"/>
</dbReference>
<dbReference type="GO" id="GO:0005675">
    <property type="term" value="C:transcription factor TFIIH holo complex"/>
    <property type="evidence" value="ECO:0000250"/>
    <property type="project" value="UniProtKB"/>
</dbReference>
<dbReference type="GO" id="GO:0070985">
    <property type="term" value="C:transcription factor TFIIK complex"/>
    <property type="evidence" value="ECO:0007669"/>
    <property type="project" value="Ensembl"/>
</dbReference>
<dbReference type="GO" id="GO:0061575">
    <property type="term" value="F:cyclin-dependent protein serine/threonine kinase activator activity"/>
    <property type="evidence" value="ECO:0007669"/>
    <property type="project" value="InterPro"/>
</dbReference>
<dbReference type="GO" id="GO:0008270">
    <property type="term" value="F:zinc ion binding"/>
    <property type="evidence" value="ECO:0007669"/>
    <property type="project" value="UniProtKB-KW"/>
</dbReference>
<dbReference type="GO" id="GO:0007512">
    <property type="term" value="P:adult heart development"/>
    <property type="evidence" value="ECO:0000315"/>
    <property type="project" value="MGI"/>
</dbReference>
<dbReference type="GO" id="GO:0000082">
    <property type="term" value="P:G1/S transition of mitotic cell cycle"/>
    <property type="evidence" value="ECO:0007669"/>
    <property type="project" value="Ensembl"/>
</dbReference>
<dbReference type="GO" id="GO:0043066">
    <property type="term" value="P:negative regulation of apoptotic process"/>
    <property type="evidence" value="ECO:0007669"/>
    <property type="project" value="Ensembl"/>
</dbReference>
<dbReference type="GO" id="GO:0006289">
    <property type="term" value="P:nucleotide-excision repair"/>
    <property type="evidence" value="ECO:0007669"/>
    <property type="project" value="InterPro"/>
</dbReference>
<dbReference type="GO" id="GO:0048661">
    <property type="term" value="P:positive regulation of smooth muscle cell proliferation"/>
    <property type="evidence" value="ECO:0007669"/>
    <property type="project" value="Ensembl"/>
</dbReference>
<dbReference type="GO" id="GO:0006355">
    <property type="term" value="P:regulation of DNA-templated transcription"/>
    <property type="evidence" value="ECO:0000315"/>
    <property type="project" value="MGI"/>
</dbReference>
<dbReference type="GO" id="GO:2000045">
    <property type="term" value="P:regulation of G1/S transition of mitotic cell cycle"/>
    <property type="evidence" value="ECO:0000266"/>
    <property type="project" value="ComplexPortal"/>
</dbReference>
<dbReference type="GO" id="GO:0006357">
    <property type="term" value="P:regulation of transcription by RNA polymerase II"/>
    <property type="evidence" value="ECO:0000250"/>
    <property type="project" value="UniProtKB"/>
</dbReference>
<dbReference type="GO" id="GO:0051592">
    <property type="term" value="P:response to calcium ion"/>
    <property type="evidence" value="ECO:0000315"/>
    <property type="project" value="MGI"/>
</dbReference>
<dbReference type="GO" id="GO:0006367">
    <property type="term" value="P:transcription initiation at RNA polymerase II promoter"/>
    <property type="evidence" value="ECO:0007669"/>
    <property type="project" value="Ensembl"/>
</dbReference>
<dbReference type="GO" id="GO:0021591">
    <property type="term" value="P:ventricular system development"/>
    <property type="evidence" value="ECO:0000315"/>
    <property type="project" value="MGI"/>
</dbReference>
<dbReference type="CDD" id="cd16517">
    <property type="entry name" value="RING-HC_MAT1"/>
    <property type="match status" value="1"/>
</dbReference>
<dbReference type="FunFam" id="3.30.40.10:FF:000037">
    <property type="entry name" value="Cdk-activating kinase assembly factor MAT1, centre"/>
    <property type="match status" value="1"/>
</dbReference>
<dbReference type="Gene3D" id="3.30.40.10">
    <property type="entry name" value="Zinc/RING finger domain, C3HC4 (zinc finger)"/>
    <property type="match status" value="1"/>
</dbReference>
<dbReference type="InterPro" id="IPR015877">
    <property type="entry name" value="Cdk-activating_kinase_MAT1_cen"/>
</dbReference>
<dbReference type="InterPro" id="IPR004575">
    <property type="entry name" value="MAT1/Tfb3"/>
</dbReference>
<dbReference type="InterPro" id="IPR003903">
    <property type="entry name" value="UIM_dom"/>
</dbReference>
<dbReference type="InterPro" id="IPR001841">
    <property type="entry name" value="Znf_RING"/>
</dbReference>
<dbReference type="InterPro" id="IPR013083">
    <property type="entry name" value="Znf_RING/FYVE/PHD"/>
</dbReference>
<dbReference type="InterPro" id="IPR017907">
    <property type="entry name" value="Znf_RING_CS"/>
</dbReference>
<dbReference type="NCBIfam" id="TIGR00570">
    <property type="entry name" value="cdk7"/>
    <property type="match status" value="1"/>
</dbReference>
<dbReference type="PANTHER" id="PTHR12683">
    <property type="entry name" value="CDK-ACTIVATING KINASE ASSEMBLY FACTOR MAT1"/>
    <property type="match status" value="1"/>
</dbReference>
<dbReference type="PANTHER" id="PTHR12683:SF13">
    <property type="entry name" value="CDK-ACTIVATING KINASE ASSEMBLY FACTOR MAT1"/>
    <property type="match status" value="1"/>
</dbReference>
<dbReference type="Pfam" id="PF06391">
    <property type="entry name" value="MAT1"/>
    <property type="match status" value="1"/>
</dbReference>
<dbReference type="Pfam" id="PF17121">
    <property type="entry name" value="zf-C3HC4_5"/>
    <property type="match status" value="1"/>
</dbReference>
<dbReference type="PIRSF" id="PIRSF003338">
    <property type="entry name" value="MAT1_metazoa"/>
    <property type="match status" value="1"/>
</dbReference>
<dbReference type="SMART" id="SM00184">
    <property type="entry name" value="RING"/>
    <property type="match status" value="1"/>
</dbReference>
<dbReference type="SUPFAM" id="SSF57850">
    <property type="entry name" value="RING/U-box"/>
    <property type="match status" value="1"/>
</dbReference>
<dbReference type="PROSITE" id="PS50330">
    <property type="entry name" value="UIM"/>
    <property type="match status" value="1"/>
</dbReference>
<dbReference type="PROSITE" id="PS00518">
    <property type="entry name" value="ZF_RING_1"/>
    <property type="match status" value="1"/>
</dbReference>
<dbReference type="PROSITE" id="PS50089">
    <property type="entry name" value="ZF_RING_2"/>
    <property type="match status" value="1"/>
</dbReference>
<comment type="function">
    <text>Stabilizes the cyclin H-CDK7 complex to form a functional CDK-activating kinase (CAK) enzymatic complex. CAK activates the cyclin-associated kinases CDK1, CDK2, CDK4 and CDK6 by threonine phosphorylation. CAK complexed to the core-TFIIH basal transcription factor activates RNA polymerase II by serine phosphorylation of the repetitive C-terminal domain (CTD) of its large subunit (POLR2A), allowing its escape from the promoter and elongation of the transcripts. Involved in cell cycle control and in RNA transcription by RNA polymerase II.</text>
</comment>
<comment type="subunit">
    <text>Associates primarily with CDK7 and cyclin H to form the CAK complex. CAK can further associate with the core-TFIIH to form the TFIIH basal transcription factor.</text>
</comment>
<comment type="subcellular location">
    <subcellularLocation>
        <location evidence="1">Nucleus</location>
    </subcellularLocation>
</comment>
<reference key="1">
    <citation type="journal article" date="1995" name="Cell">
        <title>Alternative mechanisms of CAK assembly require an assembly factor or an activating kinase.</title>
        <authorList>
            <person name="Fisher R.P."/>
            <person name="Jin P."/>
            <person name="Chamberlin H.M."/>
            <person name="Morgan D.O."/>
        </authorList>
    </citation>
    <scope>NUCLEOTIDE SEQUENCE [MRNA]</scope>
</reference>
<reference key="2">
    <citation type="journal article" date="2005" name="Science">
        <title>The transcriptional landscape of the mammalian genome.</title>
        <authorList>
            <person name="Carninci P."/>
            <person name="Kasukawa T."/>
            <person name="Katayama S."/>
            <person name="Gough J."/>
            <person name="Frith M.C."/>
            <person name="Maeda N."/>
            <person name="Oyama R."/>
            <person name="Ravasi T."/>
            <person name="Lenhard B."/>
            <person name="Wells C."/>
            <person name="Kodzius R."/>
            <person name="Shimokawa K."/>
            <person name="Bajic V.B."/>
            <person name="Brenner S.E."/>
            <person name="Batalov S."/>
            <person name="Forrest A.R."/>
            <person name="Zavolan M."/>
            <person name="Davis M.J."/>
            <person name="Wilming L.G."/>
            <person name="Aidinis V."/>
            <person name="Allen J.E."/>
            <person name="Ambesi-Impiombato A."/>
            <person name="Apweiler R."/>
            <person name="Aturaliya R.N."/>
            <person name="Bailey T.L."/>
            <person name="Bansal M."/>
            <person name="Baxter L."/>
            <person name="Beisel K.W."/>
            <person name="Bersano T."/>
            <person name="Bono H."/>
            <person name="Chalk A.M."/>
            <person name="Chiu K.P."/>
            <person name="Choudhary V."/>
            <person name="Christoffels A."/>
            <person name="Clutterbuck D.R."/>
            <person name="Crowe M.L."/>
            <person name="Dalla E."/>
            <person name="Dalrymple B.P."/>
            <person name="de Bono B."/>
            <person name="Della Gatta G."/>
            <person name="di Bernardo D."/>
            <person name="Down T."/>
            <person name="Engstrom P."/>
            <person name="Fagiolini M."/>
            <person name="Faulkner G."/>
            <person name="Fletcher C.F."/>
            <person name="Fukushima T."/>
            <person name="Furuno M."/>
            <person name="Futaki S."/>
            <person name="Gariboldi M."/>
            <person name="Georgii-Hemming P."/>
            <person name="Gingeras T.R."/>
            <person name="Gojobori T."/>
            <person name="Green R.E."/>
            <person name="Gustincich S."/>
            <person name="Harbers M."/>
            <person name="Hayashi Y."/>
            <person name="Hensch T.K."/>
            <person name="Hirokawa N."/>
            <person name="Hill D."/>
            <person name="Huminiecki L."/>
            <person name="Iacono M."/>
            <person name="Ikeo K."/>
            <person name="Iwama A."/>
            <person name="Ishikawa T."/>
            <person name="Jakt M."/>
            <person name="Kanapin A."/>
            <person name="Katoh M."/>
            <person name="Kawasawa Y."/>
            <person name="Kelso J."/>
            <person name="Kitamura H."/>
            <person name="Kitano H."/>
            <person name="Kollias G."/>
            <person name="Krishnan S.P."/>
            <person name="Kruger A."/>
            <person name="Kummerfeld S.K."/>
            <person name="Kurochkin I.V."/>
            <person name="Lareau L.F."/>
            <person name="Lazarevic D."/>
            <person name="Lipovich L."/>
            <person name="Liu J."/>
            <person name="Liuni S."/>
            <person name="McWilliam S."/>
            <person name="Madan Babu M."/>
            <person name="Madera M."/>
            <person name="Marchionni L."/>
            <person name="Matsuda H."/>
            <person name="Matsuzawa S."/>
            <person name="Miki H."/>
            <person name="Mignone F."/>
            <person name="Miyake S."/>
            <person name="Morris K."/>
            <person name="Mottagui-Tabar S."/>
            <person name="Mulder N."/>
            <person name="Nakano N."/>
            <person name="Nakauchi H."/>
            <person name="Ng P."/>
            <person name="Nilsson R."/>
            <person name="Nishiguchi S."/>
            <person name="Nishikawa S."/>
            <person name="Nori F."/>
            <person name="Ohara O."/>
            <person name="Okazaki Y."/>
            <person name="Orlando V."/>
            <person name="Pang K.C."/>
            <person name="Pavan W.J."/>
            <person name="Pavesi G."/>
            <person name="Pesole G."/>
            <person name="Petrovsky N."/>
            <person name="Piazza S."/>
            <person name="Reed J."/>
            <person name="Reid J.F."/>
            <person name="Ring B.Z."/>
            <person name="Ringwald M."/>
            <person name="Rost B."/>
            <person name="Ruan Y."/>
            <person name="Salzberg S.L."/>
            <person name="Sandelin A."/>
            <person name="Schneider C."/>
            <person name="Schoenbach C."/>
            <person name="Sekiguchi K."/>
            <person name="Semple C.A."/>
            <person name="Seno S."/>
            <person name="Sessa L."/>
            <person name="Sheng Y."/>
            <person name="Shibata Y."/>
            <person name="Shimada H."/>
            <person name="Shimada K."/>
            <person name="Silva D."/>
            <person name="Sinclair B."/>
            <person name="Sperling S."/>
            <person name="Stupka E."/>
            <person name="Sugiura K."/>
            <person name="Sultana R."/>
            <person name="Takenaka Y."/>
            <person name="Taki K."/>
            <person name="Tammoja K."/>
            <person name="Tan S.L."/>
            <person name="Tang S."/>
            <person name="Taylor M.S."/>
            <person name="Tegner J."/>
            <person name="Teichmann S.A."/>
            <person name="Ueda H.R."/>
            <person name="van Nimwegen E."/>
            <person name="Verardo R."/>
            <person name="Wei C.L."/>
            <person name="Yagi K."/>
            <person name="Yamanishi H."/>
            <person name="Zabarovsky E."/>
            <person name="Zhu S."/>
            <person name="Zimmer A."/>
            <person name="Hide W."/>
            <person name="Bult C."/>
            <person name="Grimmond S.M."/>
            <person name="Teasdale R.D."/>
            <person name="Liu E.T."/>
            <person name="Brusic V."/>
            <person name="Quackenbush J."/>
            <person name="Wahlestedt C."/>
            <person name="Mattick J.S."/>
            <person name="Hume D.A."/>
            <person name="Kai C."/>
            <person name="Sasaki D."/>
            <person name="Tomaru Y."/>
            <person name="Fukuda S."/>
            <person name="Kanamori-Katayama M."/>
            <person name="Suzuki M."/>
            <person name="Aoki J."/>
            <person name="Arakawa T."/>
            <person name="Iida J."/>
            <person name="Imamura K."/>
            <person name="Itoh M."/>
            <person name="Kato T."/>
            <person name="Kawaji H."/>
            <person name="Kawagashira N."/>
            <person name="Kawashima T."/>
            <person name="Kojima M."/>
            <person name="Kondo S."/>
            <person name="Konno H."/>
            <person name="Nakano K."/>
            <person name="Ninomiya N."/>
            <person name="Nishio T."/>
            <person name="Okada M."/>
            <person name="Plessy C."/>
            <person name="Shibata K."/>
            <person name="Shiraki T."/>
            <person name="Suzuki S."/>
            <person name="Tagami M."/>
            <person name="Waki K."/>
            <person name="Watahiki A."/>
            <person name="Okamura-Oho Y."/>
            <person name="Suzuki H."/>
            <person name="Kawai J."/>
            <person name="Hayashizaki Y."/>
        </authorList>
    </citation>
    <scope>NUCLEOTIDE SEQUENCE [LARGE SCALE MRNA]</scope>
    <source>
        <strain>C57BL/6J</strain>
        <tissue>Embryo</tissue>
        <tissue>Small intestine</tissue>
    </source>
</reference>
<reference key="3">
    <citation type="journal article" date="2004" name="Genome Res.">
        <title>The status, quality, and expansion of the NIH full-length cDNA project: the Mammalian Gene Collection (MGC).</title>
        <authorList>
            <consortium name="The MGC Project Team"/>
        </authorList>
    </citation>
    <scope>NUCLEOTIDE SEQUENCE [LARGE SCALE MRNA]</scope>
</reference>
<reference key="4">
    <citation type="journal article" date="2010" name="Cell">
        <title>A tissue-specific atlas of mouse protein phosphorylation and expression.</title>
        <authorList>
            <person name="Huttlin E.L."/>
            <person name="Jedrychowski M.P."/>
            <person name="Elias J.E."/>
            <person name="Goswami T."/>
            <person name="Rad R."/>
            <person name="Beausoleil S.A."/>
            <person name="Villen J."/>
            <person name="Haas W."/>
            <person name="Sowa M.E."/>
            <person name="Gygi S.P."/>
        </authorList>
    </citation>
    <scope>PHOSPHORYLATION [LARGE SCALE ANALYSIS] AT SER-279</scope>
    <scope>IDENTIFICATION BY MASS SPECTROMETRY [LARGE SCALE ANALYSIS]</scope>
    <source>
        <tissue>Lung</tissue>
        <tissue>Spleen</tissue>
        <tissue>Testis</tissue>
    </source>
</reference>
<name>MAT1_MOUSE</name>
<feature type="chain" id="PRO_0000055933" description="CDK-activating kinase assembly factor MAT1">
    <location>
        <begin position="1"/>
        <end position="309"/>
    </location>
</feature>
<feature type="domain" description="UIM" evidence="4">
    <location>
        <begin position="142"/>
        <end position="161"/>
    </location>
</feature>
<feature type="zinc finger region" description="RING-type" evidence="3">
    <location>
        <begin position="6"/>
        <end position="50"/>
    </location>
</feature>
<feature type="modified residue" description="N-acetylmethionine" evidence="2">
    <location>
        <position position="1"/>
    </location>
</feature>
<feature type="modified residue" description="Phosphothreonine" evidence="2">
    <location>
        <position position="51"/>
    </location>
</feature>
<feature type="modified residue" description="Phosphoserine" evidence="6">
    <location>
        <position position="279"/>
    </location>
</feature>
<feature type="sequence conflict" description="In Ref. 2; BAB25483." evidence="5" ref="2">
    <original>R</original>
    <variation>P</variation>
    <location>
        <position position="15"/>
    </location>
</feature>
<feature type="sequence conflict" description="In Ref. 2; BAB25483." evidence="5" ref="2">
    <original>I</original>
    <variation>F</variation>
    <location>
        <position position="74"/>
    </location>
</feature>
<feature type="sequence conflict" description="In Ref. 2; BAB25483." evidence="5" ref="2">
    <original>N</original>
    <variation>K</variation>
    <location>
        <position position="117"/>
    </location>
</feature>
<feature type="sequence conflict" description="In Ref. 2; BAB25483." evidence="5" ref="2">
    <original>KL</original>
    <variation>NV</variation>
    <location>
        <begin position="139"/>
        <end position="140"/>
    </location>
</feature>
<feature type="sequence conflict" description="In Ref. 1; AAA91741." evidence="5" ref="1">
    <original>R</original>
    <variation>Q</variation>
    <location>
        <position position="162"/>
    </location>
</feature>
<organism>
    <name type="scientific">Mus musculus</name>
    <name type="common">Mouse</name>
    <dbReference type="NCBI Taxonomy" id="10090"/>
    <lineage>
        <taxon>Eukaryota</taxon>
        <taxon>Metazoa</taxon>
        <taxon>Chordata</taxon>
        <taxon>Craniata</taxon>
        <taxon>Vertebrata</taxon>
        <taxon>Euteleostomi</taxon>
        <taxon>Mammalia</taxon>
        <taxon>Eutheria</taxon>
        <taxon>Euarchontoglires</taxon>
        <taxon>Glires</taxon>
        <taxon>Rodentia</taxon>
        <taxon>Myomorpha</taxon>
        <taxon>Muroidea</taxon>
        <taxon>Muridae</taxon>
        <taxon>Murinae</taxon>
        <taxon>Mus</taxon>
        <taxon>Mus</taxon>
    </lineage>
</organism>
<gene>
    <name type="primary">Mnat1</name>
    <name type="synonym">Mat1</name>
</gene>
<keyword id="KW-0007">Acetylation</keyword>
<keyword id="KW-0131">Cell cycle</keyword>
<keyword id="KW-0479">Metal-binding</keyword>
<keyword id="KW-0539">Nucleus</keyword>
<keyword id="KW-0597">Phosphoprotein</keyword>
<keyword id="KW-1185">Reference proteome</keyword>
<keyword id="KW-0804">Transcription</keyword>
<keyword id="KW-0805">Transcription regulation</keyword>
<keyword id="KW-0862">Zinc</keyword>
<keyword id="KW-0863">Zinc-finger</keyword>
<accession>P51949</accession>
<accession>Q14BS9</accession>
<accession>Q3TZP0</accession>
<accession>Q9D8A0</accession>
<accession>Q9D8D2</accession>
<sequence length="309" mass="35848">MDDQGCPRCKTTKYRNPSLKLMVNVCGHTLCESCVDLLFVRGAGNCPECGTPLRKSNFRVQLFEDPTVDKEVEIRKKVLKIYNKREEDFPSLREYNDFLEEVEEIVFNLTNNVDLENTKKKMEIYQKENKDVIQKNKLKLTREQEELEEALEVERQEHEQRRLFIQKEEELQQALKRKNKQAFLDELESSDLPVALLLAQHKDRSTQLEMQLEKPRSMKPVTFSTGIKMGQQISLAPIQKLEEALYEYQPLQIETCGPQVPEQELLGRLGYLNHVRAASPQDLAGGYTSSLACHRALQDAFSGLFWQPR</sequence>
<evidence type="ECO:0000250" key="1"/>
<evidence type="ECO:0000250" key="2">
    <source>
        <dbReference type="UniProtKB" id="P51948"/>
    </source>
</evidence>
<evidence type="ECO:0000255" key="3">
    <source>
        <dbReference type="PROSITE-ProRule" id="PRU00175"/>
    </source>
</evidence>
<evidence type="ECO:0000255" key="4">
    <source>
        <dbReference type="PROSITE-ProRule" id="PRU00213"/>
    </source>
</evidence>
<evidence type="ECO:0000305" key="5"/>
<evidence type="ECO:0007744" key="6">
    <source>
    </source>
</evidence>